<dbReference type="EC" id="2.7.4.25" evidence="1"/>
<dbReference type="EMBL" id="CU179680">
    <property type="protein sequence ID" value="CAL59425.1"/>
    <property type="molecule type" value="Genomic_DNA"/>
</dbReference>
<dbReference type="RefSeq" id="WP_011949878.1">
    <property type="nucleotide sequence ID" value="NC_009497.1"/>
</dbReference>
<dbReference type="SMR" id="A5IZG6"/>
<dbReference type="STRING" id="347257.MAG7250"/>
<dbReference type="GeneID" id="93358450"/>
<dbReference type="KEGG" id="maa:MAG7250"/>
<dbReference type="HOGENOM" id="CLU_079959_0_2_14"/>
<dbReference type="Proteomes" id="UP000007065">
    <property type="component" value="Chromosome"/>
</dbReference>
<dbReference type="GO" id="GO:0005737">
    <property type="term" value="C:cytoplasm"/>
    <property type="evidence" value="ECO:0007669"/>
    <property type="project" value="UniProtKB-SubCell"/>
</dbReference>
<dbReference type="GO" id="GO:0005524">
    <property type="term" value="F:ATP binding"/>
    <property type="evidence" value="ECO:0007669"/>
    <property type="project" value="UniProtKB-UniRule"/>
</dbReference>
<dbReference type="GO" id="GO:0036430">
    <property type="term" value="F:CMP kinase activity"/>
    <property type="evidence" value="ECO:0007669"/>
    <property type="project" value="RHEA"/>
</dbReference>
<dbReference type="GO" id="GO:0036431">
    <property type="term" value="F:dCMP kinase activity"/>
    <property type="evidence" value="ECO:0007669"/>
    <property type="project" value="RHEA"/>
</dbReference>
<dbReference type="GO" id="GO:0006220">
    <property type="term" value="P:pyrimidine nucleotide metabolic process"/>
    <property type="evidence" value="ECO:0007669"/>
    <property type="project" value="UniProtKB-UniRule"/>
</dbReference>
<dbReference type="CDD" id="cd02020">
    <property type="entry name" value="CMPK"/>
    <property type="match status" value="1"/>
</dbReference>
<dbReference type="Gene3D" id="3.40.50.300">
    <property type="entry name" value="P-loop containing nucleotide triphosphate hydrolases"/>
    <property type="match status" value="1"/>
</dbReference>
<dbReference type="HAMAP" id="MF_00238">
    <property type="entry name" value="Cytidyl_kinase_type1"/>
    <property type="match status" value="1"/>
</dbReference>
<dbReference type="InterPro" id="IPR003136">
    <property type="entry name" value="Cytidylate_kin"/>
</dbReference>
<dbReference type="InterPro" id="IPR011994">
    <property type="entry name" value="Cytidylate_kinase_dom"/>
</dbReference>
<dbReference type="InterPro" id="IPR027417">
    <property type="entry name" value="P-loop_NTPase"/>
</dbReference>
<dbReference type="NCBIfam" id="TIGR00017">
    <property type="entry name" value="cmk"/>
    <property type="match status" value="1"/>
</dbReference>
<dbReference type="Pfam" id="PF02224">
    <property type="entry name" value="Cytidylate_kin"/>
    <property type="match status" value="1"/>
</dbReference>
<dbReference type="SUPFAM" id="SSF52540">
    <property type="entry name" value="P-loop containing nucleoside triphosphate hydrolases"/>
    <property type="match status" value="1"/>
</dbReference>
<keyword id="KW-0067">ATP-binding</keyword>
<keyword id="KW-0963">Cytoplasm</keyword>
<keyword id="KW-0418">Kinase</keyword>
<keyword id="KW-0547">Nucleotide-binding</keyword>
<keyword id="KW-1185">Reference proteome</keyword>
<keyword id="KW-0808">Transferase</keyword>
<name>KCY_MYCAP</name>
<gene>
    <name evidence="1" type="primary">cmk</name>
    <name type="ordered locus">MAG7250</name>
</gene>
<evidence type="ECO:0000255" key="1">
    <source>
        <dbReference type="HAMAP-Rule" id="MF_00238"/>
    </source>
</evidence>
<feature type="chain" id="PRO_1000100669" description="Cytidylate kinase">
    <location>
        <begin position="1"/>
        <end position="221"/>
    </location>
</feature>
<feature type="binding site" evidence="1">
    <location>
        <begin position="11"/>
        <end position="19"/>
    </location>
    <ligand>
        <name>ATP</name>
        <dbReference type="ChEBI" id="CHEBI:30616"/>
    </ligand>
</feature>
<sequence>MSNKINIAIDGPCGAGKSTVAKEVSKKLKYVFINSGSVYRAIALSAIQMGVDFEVENEVFKMLSEIEIDLDEHENIFLNGENVSETIRDDKVAKAASKVAQYPLIRHYVVDFIHKITKKSKGYIMDGRDTTFKLMPHAELKIFLTGTPEVRARRRALENKDKGFETNYDVVLAEVKARDYADQHRETDPLHITDDAIVIDSTDMNFEQVVDKIVSLAKERM</sequence>
<organism>
    <name type="scientific">Mycoplasmopsis agalactiae (strain NCTC 10123 / CIP 59.7 / PG2)</name>
    <name type="common">Mycoplasma agalactiae</name>
    <dbReference type="NCBI Taxonomy" id="347257"/>
    <lineage>
        <taxon>Bacteria</taxon>
        <taxon>Bacillati</taxon>
        <taxon>Mycoplasmatota</taxon>
        <taxon>Mycoplasmoidales</taxon>
        <taxon>Metamycoplasmataceae</taxon>
        <taxon>Mycoplasmopsis</taxon>
    </lineage>
</organism>
<accession>A5IZG6</accession>
<comment type="catalytic activity">
    <reaction evidence="1">
        <text>CMP + ATP = CDP + ADP</text>
        <dbReference type="Rhea" id="RHEA:11600"/>
        <dbReference type="ChEBI" id="CHEBI:30616"/>
        <dbReference type="ChEBI" id="CHEBI:58069"/>
        <dbReference type="ChEBI" id="CHEBI:60377"/>
        <dbReference type="ChEBI" id="CHEBI:456216"/>
        <dbReference type="EC" id="2.7.4.25"/>
    </reaction>
</comment>
<comment type="catalytic activity">
    <reaction evidence="1">
        <text>dCMP + ATP = dCDP + ADP</text>
        <dbReference type="Rhea" id="RHEA:25094"/>
        <dbReference type="ChEBI" id="CHEBI:30616"/>
        <dbReference type="ChEBI" id="CHEBI:57566"/>
        <dbReference type="ChEBI" id="CHEBI:58593"/>
        <dbReference type="ChEBI" id="CHEBI:456216"/>
        <dbReference type="EC" id="2.7.4.25"/>
    </reaction>
</comment>
<comment type="subcellular location">
    <subcellularLocation>
        <location evidence="1">Cytoplasm</location>
    </subcellularLocation>
</comment>
<comment type="similarity">
    <text evidence="1">Belongs to the cytidylate kinase family. Type 1 subfamily.</text>
</comment>
<protein>
    <recommendedName>
        <fullName evidence="1">Cytidylate kinase</fullName>
        <shortName evidence="1">CK</shortName>
        <ecNumber evidence="1">2.7.4.25</ecNumber>
    </recommendedName>
    <alternativeName>
        <fullName evidence="1">Cytidine monophosphate kinase</fullName>
        <shortName evidence="1">CMP kinase</shortName>
    </alternativeName>
</protein>
<proteinExistence type="inferred from homology"/>
<reference key="1">
    <citation type="journal article" date="2007" name="PLoS Genet.">
        <title>Being pathogenic, plastic, and sexual while living with a nearly minimal bacterial genome.</title>
        <authorList>
            <person name="Sirand-Pugnet P."/>
            <person name="Lartigue C."/>
            <person name="Marenda M."/>
            <person name="Jacob D."/>
            <person name="Barre A."/>
            <person name="Barbe V."/>
            <person name="Schenowitz C."/>
            <person name="Mangenot S."/>
            <person name="Couloux A."/>
            <person name="Segurens B."/>
            <person name="de Daruvar A."/>
            <person name="Blanchard A."/>
            <person name="Citti C."/>
        </authorList>
    </citation>
    <scope>NUCLEOTIDE SEQUENCE [LARGE SCALE GENOMIC DNA]</scope>
    <source>
        <strain>NCTC 10123 / CIP 59.7 / PG2</strain>
    </source>
</reference>